<comment type="function">
    <text evidence="2">The glycine cleavage system catalyzes the degradation of glycine. The P protein binds the alpha-amino group of glycine through its pyridoxal phosphate cofactor; CO(2) is released and the remaining methylamine moiety is then transferred to the lipoamide cofactor of the H protein.</text>
</comment>
<comment type="catalytic activity">
    <reaction evidence="2">
        <text>N(6)-[(R)-lipoyl]-L-lysyl-[glycine-cleavage complex H protein] + glycine + H(+) = N(6)-[(R)-S(8)-aminomethyldihydrolipoyl]-L-lysyl-[glycine-cleavage complex H protein] + CO2</text>
        <dbReference type="Rhea" id="RHEA:24304"/>
        <dbReference type="Rhea" id="RHEA-COMP:10494"/>
        <dbReference type="Rhea" id="RHEA-COMP:10495"/>
        <dbReference type="ChEBI" id="CHEBI:15378"/>
        <dbReference type="ChEBI" id="CHEBI:16526"/>
        <dbReference type="ChEBI" id="CHEBI:57305"/>
        <dbReference type="ChEBI" id="CHEBI:83099"/>
        <dbReference type="ChEBI" id="CHEBI:83143"/>
        <dbReference type="EC" id="1.4.4.2"/>
    </reaction>
</comment>
<comment type="cofactor">
    <cofactor evidence="2">
        <name>pyridoxal 5'-phosphate</name>
        <dbReference type="ChEBI" id="CHEBI:597326"/>
    </cofactor>
</comment>
<comment type="subunit">
    <text evidence="2">The glycine cleavage system is composed of four proteins: P, T, L and H.</text>
</comment>
<comment type="similarity">
    <text evidence="2">Belongs to the GcvP family.</text>
</comment>
<dbReference type="EC" id="1.4.4.2" evidence="2"/>
<dbReference type="EMBL" id="AE005174">
    <property type="protein sequence ID" value="AAG58030.1"/>
    <property type="molecule type" value="Genomic_DNA"/>
</dbReference>
<dbReference type="EMBL" id="BA000007">
    <property type="protein sequence ID" value="BAB37197.1"/>
    <property type="molecule type" value="Genomic_DNA"/>
</dbReference>
<dbReference type="PIR" id="B85946">
    <property type="entry name" value="B85946"/>
</dbReference>
<dbReference type="PIR" id="F91100">
    <property type="entry name" value="F91100"/>
</dbReference>
<dbReference type="RefSeq" id="NP_311801.1">
    <property type="nucleotide sequence ID" value="NC_002695.1"/>
</dbReference>
<dbReference type="RefSeq" id="WP_000195009.1">
    <property type="nucleotide sequence ID" value="NZ_VOAI01000003.1"/>
</dbReference>
<dbReference type="SMR" id="Q8XD33"/>
<dbReference type="STRING" id="155864.Z4240"/>
<dbReference type="GeneID" id="916407"/>
<dbReference type="KEGG" id="ece:Z4240"/>
<dbReference type="KEGG" id="ecs:ECs_3774"/>
<dbReference type="PATRIC" id="fig|386585.9.peg.3939"/>
<dbReference type="eggNOG" id="COG0403">
    <property type="taxonomic scope" value="Bacteria"/>
</dbReference>
<dbReference type="eggNOG" id="COG1003">
    <property type="taxonomic scope" value="Bacteria"/>
</dbReference>
<dbReference type="HOGENOM" id="CLU_004620_1_1_6"/>
<dbReference type="OMA" id="RNLICTC"/>
<dbReference type="Proteomes" id="UP000000558">
    <property type="component" value="Chromosome"/>
</dbReference>
<dbReference type="Proteomes" id="UP000002519">
    <property type="component" value="Chromosome"/>
</dbReference>
<dbReference type="GO" id="GO:0005829">
    <property type="term" value="C:cytosol"/>
    <property type="evidence" value="ECO:0007669"/>
    <property type="project" value="TreeGrafter"/>
</dbReference>
<dbReference type="GO" id="GO:0005960">
    <property type="term" value="C:glycine cleavage complex"/>
    <property type="evidence" value="ECO:0007669"/>
    <property type="project" value="TreeGrafter"/>
</dbReference>
<dbReference type="GO" id="GO:0016594">
    <property type="term" value="F:glycine binding"/>
    <property type="evidence" value="ECO:0007669"/>
    <property type="project" value="TreeGrafter"/>
</dbReference>
<dbReference type="GO" id="GO:0004375">
    <property type="term" value="F:glycine dehydrogenase (decarboxylating) activity"/>
    <property type="evidence" value="ECO:0007669"/>
    <property type="project" value="UniProtKB-EC"/>
</dbReference>
<dbReference type="GO" id="GO:0030170">
    <property type="term" value="F:pyridoxal phosphate binding"/>
    <property type="evidence" value="ECO:0007669"/>
    <property type="project" value="TreeGrafter"/>
</dbReference>
<dbReference type="GO" id="GO:0019464">
    <property type="term" value="P:glycine decarboxylation via glycine cleavage system"/>
    <property type="evidence" value="ECO:0007669"/>
    <property type="project" value="UniProtKB-UniRule"/>
</dbReference>
<dbReference type="CDD" id="cd00613">
    <property type="entry name" value="GDC-P"/>
    <property type="match status" value="2"/>
</dbReference>
<dbReference type="FunFam" id="3.40.640.10:FF:000005">
    <property type="entry name" value="Glycine dehydrogenase (decarboxylating), mitochondrial"/>
    <property type="match status" value="1"/>
</dbReference>
<dbReference type="FunFam" id="3.90.1150.10:FF:000007">
    <property type="entry name" value="Glycine dehydrogenase (decarboxylating), mitochondrial"/>
    <property type="match status" value="1"/>
</dbReference>
<dbReference type="FunFam" id="3.40.640.10:FF:000007">
    <property type="entry name" value="glycine dehydrogenase (Decarboxylating), mitochondrial"/>
    <property type="match status" value="1"/>
</dbReference>
<dbReference type="Gene3D" id="3.90.1150.10">
    <property type="entry name" value="Aspartate Aminotransferase, domain 1"/>
    <property type="match status" value="1"/>
</dbReference>
<dbReference type="Gene3D" id="3.40.640.10">
    <property type="entry name" value="Type I PLP-dependent aspartate aminotransferase-like (Major domain)"/>
    <property type="match status" value="2"/>
</dbReference>
<dbReference type="HAMAP" id="MF_00711">
    <property type="entry name" value="GcvP"/>
    <property type="match status" value="1"/>
</dbReference>
<dbReference type="InterPro" id="IPR003437">
    <property type="entry name" value="GcvP"/>
</dbReference>
<dbReference type="InterPro" id="IPR049316">
    <property type="entry name" value="GDC-P_C"/>
</dbReference>
<dbReference type="InterPro" id="IPR049315">
    <property type="entry name" value="GDC-P_N"/>
</dbReference>
<dbReference type="InterPro" id="IPR020581">
    <property type="entry name" value="GDC_P"/>
</dbReference>
<dbReference type="InterPro" id="IPR015424">
    <property type="entry name" value="PyrdxlP-dep_Trfase"/>
</dbReference>
<dbReference type="InterPro" id="IPR015421">
    <property type="entry name" value="PyrdxlP-dep_Trfase_major"/>
</dbReference>
<dbReference type="InterPro" id="IPR015422">
    <property type="entry name" value="PyrdxlP-dep_Trfase_small"/>
</dbReference>
<dbReference type="NCBIfam" id="TIGR00461">
    <property type="entry name" value="gcvP"/>
    <property type="match status" value="1"/>
</dbReference>
<dbReference type="NCBIfam" id="NF003346">
    <property type="entry name" value="PRK04366.1"/>
    <property type="match status" value="1"/>
</dbReference>
<dbReference type="PANTHER" id="PTHR11773:SF13">
    <property type="entry name" value="GLYCINE DEHYDROGENASE (DECARBOXYLATING)"/>
    <property type="match status" value="1"/>
</dbReference>
<dbReference type="PANTHER" id="PTHR11773">
    <property type="entry name" value="GLYCINE DEHYDROGENASE, DECARBOXYLATING"/>
    <property type="match status" value="1"/>
</dbReference>
<dbReference type="Pfam" id="PF21478">
    <property type="entry name" value="GcvP2_C"/>
    <property type="match status" value="1"/>
</dbReference>
<dbReference type="Pfam" id="PF02347">
    <property type="entry name" value="GDC-P"/>
    <property type="match status" value="2"/>
</dbReference>
<dbReference type="SUPFAM" id="SSF53383">
    <property type="entry name" value="PLP-dependent transferases"/>
    <property type="match status" value="2"/>
</dbReference>
<organism>
    <name type="scientific">Escherichia coli O157:H7</name>
    <dbReference type="NCBI Taxonomy" id="83334"/>
    <lineage>
        <taxon>Bacteria</taxon>
        <taxon>Pseudomonadati</taxon>
        <taxon>Pseudomonadota</taxon>
        <taxon>Gammaproteobacteria</taxon>
        <taxon>Enterobacterales</taxon>
        <taxon>Enterobacteriaceae</taxon>
        <taxon>Escherichia</taxon>
    </lineage>
</organism>
<protein>
    <recommendedName>
        <fullName evidence="2">Glycine dehydrogenase (decarboxylating)</fullName>
        <ecNumber evidence="2">1.4.4.2</ecNumber>
    </recommendedName>
    <alternativeName>
        <fullName evidence="2">Glycine cleavage system P-protein</fullName>
    </alternativeName>
    <alternativeName>
        <fullName evidence="2">Glycine decarboxylase</fullName>
    </alternativeName>
    <alternativeName>
        <fullName evidence="2">Glycine dehydrogenase (aminomethyl-transferring)</fullName>
    </alternativeName>
</protein>
<gene>
    <name evidence="2" type="primary">gcvP</name>
    <name type="ordered locus">Z4240</name>
    <name type="ordered locus">ECs3774</name>
</gene>
<name>GCSP_ECO57</name>
<feature type="initiator methionine" description="Removed" evidence="1">
    <location>
        <position position="1"/>
    </location>
</feature>
<feature type="chain" id="PRO_0000166915" description="Glycine dehydrogenase (decarboxylating)">
    <location>
        <begin position="2"/>
        <end position="957"/>
    </location>
</feature>
<feature type="modified residue" description="N6-(pyridoxal phosphate)lysine" evidence="2">
    <location>
        <position position="708"/>
    </location>
</feature>
<reference key="1">
    <citation type="journal article" date="2001" name="Nature">
        <title>Genome sequence of enterohaemorrhagic Escherichia coli O157:H7.</title>
        <authorList>
            <person name="Perna N.T."/>
            <person name="Plunkett G. III"/>
            <person name="Burland V."/>
            <person name="Mau B."/>
            <person name="Glasner J.D."/>
            <person name="Rose D.J."/>
            <person name="Mayhew G.F."/>
            <person name="Evans P.S."/>
            <person name="Gregor J."/>
            <person name="Kirkpatrick H.A."/>
            <person name="Posfai G."/>
            <person name="Hackett J."/>
            <person name="Klink S."/>
            <person name="Boutin A."/>
            <person name="Shao Y."/>
            <person name="Miller L."/>
            <person name="Grotbeck E.J."/>
            <person name="Davis N.W."/>
            <person name="Lim A."/>
            <person name="Dimalanta E.T."/>
            <person name="Potamousis K."/>
            <person name="Apodaca J."/>
            <person name="Anantharaman T.S."/>
            <person name="Lin J."/>
            <person name="Yen G."/>
            <person name="Schwartz D.C."/>
            <person name="Welch R.A."/>
            <person name="Blattner F.R."/>
        </authorList>
    </citation>
    <scope>NUCLEOTIDE SEQUENCE [LARGE SCALE GENOMIC DNA]</scope>
    <source>
        <strain>O157:H7 / EDL933 / ATCC 700927 / EHEC</strain>
    </source>
</reference>
<reference key="2">
    <citation type="journal article" date="2001" name="DNA Res.">
        <title>Complete genome sequence of enterohemorrhagic Escherichia coli O157:H7 and genomic comparison with a laboratory strain K-12.</title>
        <authorList>
            <person name="Hayashi T."/>
            <person name="Makino K."/>
            <person name="Ohnishi M."/>
            <person name="Kurokawa K."/>
            <person name="Ishii K."/>
            <person name="Yokoyama K."/>
            <person name="Han C.-G."/>
            <person name="Ohtsubo E."/>
            <person name="Nakayama K."/>
            <person name="Murata T."/>
            <person name="Tanaka M."/>
            <person name="Tobe T."/>
            <person name="Iida T."/>
            <person name="Takami H."/>
            <person name="Honda T."/>
            <person name="Sasakawa C."/>
            <person name="Ogasawara N."/>
            <person name="Yasunaga T."/>
            <person name="Kuhara S."/>
            <person name="Shiba T."/>
            <person name="Hattori M."/>
            <person name="Shinagawa H."/>
        </authorList>
    </citation>
    <scope>NUCLEOTIDE SEQUENCE [LARGE SCALE GENOMIC DNA]</scope>
    <source>
        <strain>O157:H7 / Sakai / RIMD 0509952 / EHEC</strain>
    </source>
</reference>
<keyword id="KW-0560">Oxidoreductase</keyword>
<keyword id="KW-0663">Pyridoxal phosphate</keyword>
<keyword id="KW-1185">Reference proteome</keyword>
<evidence type="ECO:0000250" key="1"/>
<evidence type="ECO:0000255" key="2">
    <source>
        <dbReference type="HAMAP-Rule" id="MF_00711"/>
    </source>
</evidence>
<accession>Q8XD33</accession>
<proteinExistence type="inferred from homology"/>
<sequence length="957" mass="104347">MTQTLSQLENSGAFIERHIGPDAAQQQEMLNAVGAQSLNALTGQIVPKDIQLATPPQVGAPATEYAALAELKAIASRNKRFTSYIGMGYTAVQLPPVILRNMLENPGWYTAYTPYQPEVSQGRLEALLNFQQVTLDLTGLDMASASLLDEATAAAEAMAMAKRVSKLKNANRFFVASDVHPQTLDVVRTRAETFGFEVIVDDAQKVLDHQDIFGVLLQQVGTTGEIHDYTALISELKSRKIVVSVAADIMALVLLTAPGKQGADIVFGSAQRFGVPMGYGGPHAAFFAAKDEYKRSMPGRIIGVSKDAAGNTALRMAMQTREQHIRREKANSNICTSQVLLANIASLYAVYHGPIGLKRIANRIHRLTDILAAGLQQKGLKLRHAHYFDTLCVEVADKAGVLARAEAAEINLRSDILNAVGITLDETTTRENVMQLFSVLLGDNHGLDIDTLDKDVAHDSRSIQPAMLRDDEILTHPVFNRYHSETEMMRYMHSLERKDLALNQAMIPLGSCTMKLNAAAEMIPITWPEFAELHPFCPPEQAEGYQQMIAQLADWLVKLTGYDAVCMQPNSGAQGEYAGLLAIRHYHESRNEGHRDICLIPASAHGTNPASAHMAGMQVVVVACDKNGNIDLTDLRAKAEQAGDNLSCIMVTYPSTHGVYEETIREVCEVVHQFGGQVYLDGANMNAQVGITSPGFIGADVSHLNLHKTFCIPHGGGGPGMGPIGVKAHLAPFVPGHSVVQIEGMLTRQGAVSAAPFGSASILPISWMYIRMMGAEGLKKASQVAILNANYIASRLQDAFPVLYTGRDGRVAHECILDIRPLKEETGISELDIAKRLIDYGFHAPTMSFPVAGTLMVEPTESESKVELDRFIDAMLAIRAEIDQVKAGVWPLEDNPLVNAPHIQSELVAEWAHPYSREVAVFPAGVADKYWPTVKRLDDVYGDRNLFCSCVPISEYQ</sequence>